<gene>
    <name evidence="1" type="primary">nuoA</name>
    <name type="ordered locus">BamMC406_2166</name>
</gene>
<organism>
    <name type="scientific">Burkholderia ambifaria (strain MC40-6)</name>
    <dbReference type="NCBI Taxonomy" id="398577"/>
    <lineage>
        <taxon>Bacteria</taxon>
        <taxon>Pseudomonadati</taxon>
        <taxon>Pseudomonadota</taxon>
        <taxon>Betaproteobacteria</taxon>
        <taxon>Burkholderiales</taxon>
        <taxon>Burkholderiaceae</taxon>
        <taxon>Burkholderia</taxon>
        <taxon>Burkholderia cepacia complex</taxon>
    </lineage>
</organism>
<dbReference type="EC" id="7.1.1.-" evidence="1"/>
<dbReference type="EMBL" id="CP001025">
    <property type="protein sequence ID" value="ACB64645.1"/>
    <property type="molecule type" value="Genomic_DNA"/>
</dbReference>
<dbReference type="RefSeq" id="WP_006398798.1">
    <property type="nucleotide sequence ID" value="NC_010551.1"/>
</dbReference>
<dbReference type="SMR" id="B1YTQ7"/>
<dbReference type="KEGG" id="bac:BamMC406_2166"/>
<dbReference type="HOGENOM" id="CLU_119549_3_1_4"/>
<dbReference type="OrthoDB" id="9791970at2"/>
<dbReference type="Proteomes" id="UP000001680">
    <property type="component" value="Chromosome 1"/>
</dbReference>
<dbReference type="GO" id="GO:0030964">
    <property type="term" value="C:NADH dehydrogenase complex"/>
    <property type="evidence" value="ECO:0007669"/>
    <property type="project" value="TreeGrafter"/>
</dbReference>
<dbReference type="GO" id="GO:0005886">
    <property type="term" value="C:plasma membrane"/>
    <property type="evidence" value="ECO:0007669"/>
    <property type="project" value="UniProtKB-SubCell"/>
</dbReference>
<dbReference type="GO" id="GO:0008137">
    <property type="term" value="F:NADH dehydrogenase (ubiquinone) activity"/>
    <property type="evidence" value="ECO:0007669"/>
    <property type="project" value="InterPro"/>
</dbReference>
<dbReference type="GO" id="GO:0050136">
    <property type="term" value="F:NADH:ubiquinone reductase (non-electrogenic) activity"/>
    <property type="evidence" value="ECO:0007669"/>
    <property type="project" value="UniProtKB-UniRule"/>
</dbReference>
<dbReference type="GO" id="GO:0048038">
    <property type="term" value="F:quinone binding"/>
    <property type="evidence" value="ECO:0007669"/>
    <property type="project" value="UniProtKB-KW"/>
</dbReference>
<dbReference type="FunFam" id="1.20.58.1610:FF:000004">
    <property type="entry name" value="NADH-quinone oxidoreductase subunit A"/>
    <property type="match status" value="1"/>
</dbReference>
<dbReference type="Gene3D" id="1.20.58.1610">
    <property type="entry name" value="NADH:ubiquinone/plastoquinone oxidoreductase, chain 3"/>
    <property type="match status" value="1"/>
</dbReference>
<dbReference type="HAMAP" id="MF_01394">
    <property type="entry name" value="NDH1_NuoA"/>
    <property type="match status" value="1"/>
</dbReference>
<dbReference type="InterPro" id="IPR023043">
    <property type="entry name" value="NAD(P)H_OxRDtase_bac/plastid"/>
</dbReference>
<dbReference type="InterPro" id="IPR000440">
    <property type="entry name" value="NADH_UbQ/plastoQ_OxRdtase_su3"/>
</dbReference>
<dbReference type="InterPro" id="IPR038430">
    <property type="entry name" value="NDAH_ubi_oxred_su3_sf"/>
</dbReference>
<dbReference type="PANTHER" id="PTHR11058">
    <property type="entry name" value="NADH-UBIQUINONE OXIDOREDUCTASE CHAIN 3"/>
    <property type="match status" value="1"/>
</dbReference>
<dbReference type="PANTHER" id="PTHR11058:SF9">
    <property type="entry name" value="NADH-UBIQUINONE OXIDOREDUCTASE CHAIN 3"/>
    <property type="match status" value="1"/>
</dbReference>
<dbReference type="Pfam" id="PF00507">
    <property type="entry name" value="Oxidored_q4"/>
    <property type="match status" value="1"/>
</dbReference>
<reference key="1">
    <citation type="submission" date="2008-04" db="EMBL/GenBank/DDBJ databases">
        <title>Complete sequence of chromosome 1 of Burkholderia ambifaria MC40-6.</title>
        <authorList>
            <person name="Copeland A."/>
            <person name="Lucas S."/>
            <person name="Lapidus A."/>
            <person name="Glavina del Rio T."/>
            <person name="Dalin E."/>
            <person name="Tice H."/>
            <person name="Pitluck S."/>
            <person name="Chain P."/>
            <person name="Malfatti S."/>
            <person name="Shin M."/>
            <person name="Vergez L."/>
            <person name="Lang D."/>
            <person name="Schmutz J."/>
            <person name="Larimer F."/>
            <person name="Land M."/>
            <person name="Hauser L."/>
            <person name="Kyrpides N."/>
            <person name="Lykidis A."/>
            <person name="Ramette A."/>
            <person name="Konstantinidis K."/>
            <person name="Tiedje J."/>
            <person name="Richardson P."/>
        </authorList>
    </citation>
    <scope>NUCLEOTIDE SEQUENCE [LARGE SCALE GENOMIC DNA]</scope>
    <source>
        <strain>MC40-6</strain>
    </source>
</reference>
<sequence>MNLAAYYPVLLFLLVGTGLGIALVSIGKLLGPNKPDVEKNAPYECGFEAFEDARMKFDVRYYLVAILFIIFDLETAFLFPWGVALRDIGWPGFIAMMIFLLEFLLGFAYIWKKGGLDWE</sequence>
<protein>
    <recommendedName>
        <fullName evidence="1">NADH-quinone oxidoreductase subunit A</fullName>
        <ecNumber evidence="1">7.1.1.-</ecNumber>
    </recommendedName>
    <alternativeName>
        <fullName evidence="1">NADH dehydrogenase I subunit A</fullName>
    </alternativeName>
    <alternativeName>
        <fullName evidence="1">NDH-1 subunit A</fullName>
    </alternativeName>
    <alternativeName>
        <fullName evidence="1">NUO1</fullName>
    </alternativeName>
</protein>
<accession>B1YTQ7</accession>
<name>NUOA_BURA4</name>
<comment type="function">
    <text evidence="1">NDH-1 shuttles electrons from NADH, via FMN and iron-sulfur (Fe-S) centers, to quinones in the respiratory chain. The immediate electron acceptor for the enzyme in this species is believed to be ubiquinone. Couples the redox reaction to proton translocation (for every two electrons transferred, four hydrogen ions are translocated across the cytoplasmic membrane), and thus conserves the redox energy in a proton gradient.</text>
</comment>
<comment type="catalytic activity">
    <reaction evidence="1">
        <text>a quinone + NADH + 5 H(+)(in) = a quinol + NAD(+) + 4 H(+)(out)</text>
        <dbReference type="Rhea" id="RHEA:57888"/>
        <dbReference type="ChEBI" id="CHEBI:15378"/>
        <dbReference type="ChEBI" id="CHEBI:24646"/>
        <dbReference type="ChEBI" id="CHEBI:57540"/>
        <dbReference type="ChEBI" id="CHEBI:57945"/>
        <dbReference type="ChEBI" id="CHEBI:132124"/>
    </reaction>
</comment>
<comment type="subunit">
    <text evidence="1">NDH-1 is composed of 14 different subunits. Subunits NuoA, H, J, K, L, M, N constitute the membrane sector of the complex.</text>
</comment>
<comment type="subcellular location">
    <subcellularLocation>
        <location evidence="1">Cell inner membrane</location>
        <topology evidence="1">Multi-pass membrane protein</topology>
    </subcellularLocation>
</comment>
<comment type="similarity">
    <text evidence="1">Belongs to the complex I subunit 3 family.</text>
</comment>
<keyword id="KW-0997">Cell inner membrane</keyword>
<keyword id="KW-1003">Cell membrane</keyword>
<keyword id="KW-0472">Membrane</keyword>
<keyword id="KW-0520">NAD</keyword>
<keyword id="KW-0874">Quinone</keyword>
<keyword id="KW-1278">Translocase</keyword>
<keyword id="KW-0812">Transmembrane</keyword>
<keyword id="KW-1133">Transmembrane helix</keyword>
<keyword id="KW-0813">Transport</keyword>
<keyword id="KW-0830">Ubiquinone</keyword>
<proteinExistence type="inferred from homology"/>
<feature type="chain" id="PRO_0000362634" description="NADH-quinone oxidoreductase subunit A">
    <location>
        <begin position="1"/>
        <end position="119"/>
    </location>
</feature>
<feature type="transmembrane region" description="Helical" evidence="1">
    <location>
        <begin position="7"/>
        <end position="27"/>
    </location>
</feature>
<feature type="transmembrane region" description="Helical" evidence="1">
    <location>
        <begin position="63"/>
        <end position="83"/>
    </location>
</feature>
<feature type="transmembrane region" description="Helical" evidence="1">
    <location>
        <begin position="88"/>
        <end position="108"/>
    </location>
</feature>
<evidence type="ECO:0000255" key="1">
    <source>
        <dbReference type="HAMAP-Rule" id="MF_01394"/>
    </source>
</evidence>